<protein>
    <recommendedName>
        <fullName evidence="1">Heme A synthase</fullName>
        <shortName evidence="1">HAS</shortName>
        <ecNumber evidence="1">1.17.99.9</ecNumber>
    </recommendedName>
    <alternativeName>
        <fullName evidence="1">Cytochrome aa3-controlling protein</fullName>
    </alternativeName>
</protein>
<feature type="chain" id="PRO_0000348981" description="Heme A synthase">
    <location>
        <begin position="1"/>
        <end position="305"/>
    </location>
</feature>
<feature type="topological domain" description="Cytoplasmic" evidence="1">
    <location>
        <begin position="1"/>
        <end position="6"/>
    </location>
</feature>
<feature type="transmembrane region" description="Helical" evidence="1">
    <location>
        <begin position="7"/>
        <end position="27"/>
    </location>
</feature>
<feature type="topological domain" description="Extracellular" evidence="1">
    <location>
        <begin position="28"/>
        <end position="63"/>
    </location>
</feature>
<feature type="transmembrane region" description="Helical" evidence="1">
    <location>
        <begin position="64"/>
        <end position="84"/>
    </location>
</feature>
<feature type="topological domain" description="Cytoplasmic" evidence="1">
    <location>
        <begin position="85"/>
        <end position="92"/>
    </location>
</feature>
<feature type="transmembrane region" description="Helical" evidence="1">
    <location>
        <begin position="93"/>
        <end position="113"/>
    </location>
</feature>
<feature type="topological domain" description="Extracellular" evidence="1">
    <location>
        <begin position="114"/>
        <end position="122"/>
    </location>
</feature>
<feature type="transmembrane region" description="Helical" evidence="1">
    <location>
        <begin position="123"/>
        <end position="143"/>
    </location>
</feature>
<feature type="topological domain" description="Cytoplasmic" evidence="1">
    <location>
        <begin position="144"/>
        <end position="160"/>
    </location>
</feature>
<feature type="transmembrane region" description="Helical" evidence="1">
    <location>
        <begin position="161"/>
        <end position="181"/>
    </location>
</feature>
<feature type="topological domain" description="Extracellular" evidence="1">
    <location>
        <begin position="182"/>
        <end position="212"/>
    </location>
</feature>
<feature type="transmembrane region" description="Helical" evidence="1">
    <location>
        <begin position="213"/>
        <end position="233"/>
    </location>
</feature>
<feature type="topological domain" description="Cytoplasmic" evidence="1">
    <location>
        <begin position="234"/>
        <end position="240"/>
    </location>
</feature>
<feature type="transmembrane region" description="Helical" evidence="1">
    <location>
        <begin position="241"/>
        <end position="261"/>
    </location>
</feature>
<feature type="topological domain" description="Extracellular" evidence="1">
    <location>
        <begin position="262"/>
        <end position="271"/>
    </location>
</feature>
<feature type="transmembrane region" description="Helical" evidence="1">
    <location>
        <begin position="272"/>
        <end position="292"/>
    </location>
</feature>
<feature type="topological domain" description="Cytoplasmic" evidence="1">
    <location>
        <begin position="293"/>
        <end position="305"/>
    </location>
</feature>
<feature type="active site" evidence="1">
    <location>
        <position position="59"/>
    </location>
</feature>
<feature type="binding site" description="axial binding residue" evidence="1">
    <location>
        <position position="62"/>
    </location>
    <ligand>
        <name>heme o</name>
        <dbReference type="ChEBI" id="CHEBI:24480"/>
    </ligand>
    <ligandPart>
        <name>Fe</name>
        <dbReference type="ChEBI" id="CHEBI:18248"/>
    </ligandPart>
</feature>
<feature type="binding site" description="axial binding residue" evidence="1">
    <location>
        <position position="124"/>
    </location>
    <ligand>
        <name>heme o</name>
        <dbReference type="ChEBI" id="CHEBI:24480"/>
    </ligand>
    <ligandPart>
        <name>Fe</name>
        <dbReference type="ChEBI" id="CHEBI:18248"/>
    </ligandPart>
</feature>
<feature type="binding site" description="axial binding residue" evidence="1">
    <location>
        <position position="214"/>
    </location>
    <ligand>
        <name>heme b</name>
        <dbReference type="ChEBI" id="CHEBI:60344"/>
    </ligand>
    <ligandPart>
        <name>Fe</name>
        <dbReference type="ChEBI" id="CHEBI:18248"/>
    </ligandPart>
</feature>
<feature type="binding site" description="axial binding residue" evidence="1">
    <location>
        <position position="276"/>
    </location>
    <ligand>
        <name>heme b</name>
        <dbReference type="ChEBI" id="CHEBI:60344"/>
    </ligand>
    <ligandPart>
        <name>Fe</name>
        <dbReference type="ChEBI" id="CHEBI:18248"/>
    </ligandPart>
</feature>
<feature type="disulfide bond" description="Essential for catalytic activity" evidence="1">
    <location>
        <begin position="35"/>
        <end position="42"/>
    </location>
</feature>
<keyword id="KW-1003">Cell membrane</keyword>
<keyword id="KW-1015">Disulfide bond</keyword>
<keyword id="KW-0350">Heme biosynthesis</keyword>
<keyword id="KW-0408">Iron</keyword>
<keyword id="KW-0472">Membrane</keyword>
<keyword id="KW-0479">Metal-binding</keyword>
<keyword id="KW-0560">Oxidoreductase</keyword>
<keyword id="KW-0812">Transmembrane</keyword>
<keyword id="KW-1133">Transmembrane helix</keyword>
<name>CTAA_LISIN</name>
<reference key="1">
    <citation type="journal article" date="2001" name="Science">
        <title>Comparative genomics of Listeria species.</title>
        <authorList>
            <person name="Glaser P."/>
            <person name="Frangeul L."/>
            <person name="Buchrieser C."/>
            <person name="Rusniok C."/>
            <person name="Amend A."/>
            <person name="Baquero F."/>
            <person name="Berche P."/>
            <person name="Bloecker H."/>
            <person name="Brandt P."/>
            <person name="Chakraborty T."/>
            <person name="Charbit A."/>
            <person name="Chetouani F."/>
            <person name="Couve E."/>
            <person name="de Daruvar A."/>
            <person name="Dehoux P."/>
            <person name="Domann E."/>
            <person name="Dominguez-Bernal G."/>
            <person name="Duchaud E."/>
            <person name="Durant L."/>
            <person name="Dussurget O."/>
            <person name="Entian K.-D."/>
            <person name="Fsihi H."/>
            <person name="Garcia-del Portillo F."/>
            <person name="Garrido P."/>
            <person name="Gautier L."/>
            <person name="Goebel W."/>
            <person name="Gomez-Lopez N."/>
            <person name="Hain T."/>
            <person name="Hauf J."/>
            <person name="Jackson D."/>
            <person name="Jones L.-M."/>
            <person name="Kaerst U."/>
            <person name="Kreft J."/>
            <person name="Kuhn M."/>
            <person name="Kunst F."/>
            <person name="Kurapkat G."/>
            <person name="Madueno E."/>
            <person name="Maitournam A."/>
            <person name="Mata Vicente J."/>
            <person name="Ng E."/>
            <person name="Nedjari H."/>
            <person name="Nordsiek G."/>
            <person name="Novella S."/>
            <person name="de Pablos B."/>
            <person name="Perez-Diaz J.-C."/>
            <person name="Purcell R."/>
            <person name="Remmel B."/>
            <person name="Rose M."/>
            <person name="Schlueter T."/>
            <person name="Simoes N."/>
            <person name="Tierrez A."/>
            <person name="Vazquez-Boland J.-A."/>
            <person name="Voss H."/>
            <person name="Wehland J."/>
            <person name="Cossart P."/>
        </authorList>
    </citation>
    <scope>NUCLEOTIDE SEQUENCE [LARGE SCALE GENOMIC DNA]</scope>
    <source>
        <strain>ATCC BAA-680 / CLIP 11262</strain>
    </source>
</reference>
<evidence type="ECO:0000255" key="1">
    <source>
        <dbReference type="HAMAP-Rule" id="MF_01664"/>
    </source>
</evidence>
<proteinExistence type="inferred from homology"/>
<dbReference type="EC" id="1.17.99.9" evidence="1"/>
<dbReference type="EMBL" id="AL596171">
    <property type="protein sequence ID" value="CAC97394.1"/>
    <property type="molecule type" value="Genomic_DNA"/>
</dbReference>
<dbReference type="PIR" id="AB1703">
    <property type="entry name" value="AB1703"/>
</dbReference>
<dbReference type="RefSeq" id="WP_003723941.1">
    <property type="nucleotide sequence ID" value="NC_003212.1"/>
</dbReference>
<dbReference type="SMR" id="Q929V9"/>
<dbReference type="STRING" id="272626.gene:17566522"/>
<dbReference type="KEGG" id="lin:ctaA"/>
<dbReference type="eggNOG" id="COG1612">
    <property type="taxonomic scope" value="Bacteria"/>
</dbReference>
<dbReference type="HOGENOM" id="CLU_041525_3_1_9"/>
<dbReference type="OrthoDB" id="9816428at2"/>
<dbReference type="UniPathway" id="UPA00269">
    <property type="reaction ID" value="UER00713"/>
</dbReference>
<dbReference type="Proteomes" id="UP000002513">
    <property type="component" value="Chromosome"/>
</dbReference>
<dbReference type="GO" id="GO:0005886">
    <property type="term" value="C:plasma membrane"/>
    <property type="evidence" value="ECO:0007669"/>
    <property type="project" value="UniProtKB-SubCell"/>
</dbReference>
<dbReference type="GO" id="GO:0046872">
    <property type="term" value="F:metal ion binding"/>
    <property type="evidence" value="ECO:0007669"/>
    <property type="project" value="UniProtKB-KW"/>
</dbReference>
<dbReference type="GO" id="GO:0016653">
    <property type="term" value="F:oxidoreductase activity, acting on NAD(P)H, heme protein as acceptor"/>
    <property type="evidence" value="ECO:0007669"/>
    <property type="project" value="InterPro"/>
</dbReference>
<dbReference type="GO" id="GO:0006784">
    <property type="term" value="P:heme A biosynthetic process"/>
    <property type="evidence" value="ECO:0007669"/>
    <property type="project" value="UniProtKB-UniRule"/>
</dbReference>
<dbReference type="HAMAP" id="MF_01664">
    <property type="entry name" value="HemeA_synth_type1"/>
    <property type="match status" value="1"/>
</dbReference>
<dbReference type="InterPro" id="IPR003780">
    <property type="entry name" value="COX15/CtaA_fam"/>
</dbReference>
<dbReference type="InterPro" id="IPR050450">
    <property type="entry name" value="COX15/CtaA_HemeA_synthase"/>
</dbReference>
<dbReference type="InterPro" id="IPR023755">
    <property type="entry name" value="HemeA_Synthase_type1"/>
</dbReference>
<dbReference type="PANTHER" id="PTHR35457">
    <property type="entry name" value="HEME A SYNTHASE"/>
    <property type="match status" value="1"/>
</dbReference>
<dbReference type="PANTHER" id="PTHR35457:SF1">
    <property type="entry name" value="HEME A SYNTHASE"/>
    <property type="match status" value="1"/>
</dbReference>
<dbReference type="Pfam" id="PF02628">
    <property type="entry name" value="COX15-CtaA"/>
    <property type="match status" value="1"/>
</dbReference>
<accession>Q929V9</accession>
<comment type="function">
    <text evidence="1">Catalyzes the conversion of heme O to heme A by two successive hydroxylations of the methyl group at C8. The first hydroxylation forms heme I, the second hydroxylation results in an unstable dihydroxymethyl group, which spontaneously dehydrates, resulting in the formyl group of heme A.</text>
</comment>
<comment type="catalytic activity">
    <reaction evidence="1">
        <text>Fe(II)-heme o + 2 A + H2O = Fe(II)-heme a + 2 AH2</text>
        <dbReference type="Rhea" id="RHEA:63388"/>
        <dbReference type="ChEBI" id="CHEBI:13193"/>
        <dbReference type="ChEBI" id="CHEBI:15377"/>
        <dbReference type="ChEBI" id="CHEBI:17499"/>
        <dbReference type="ChEBI" id="CHEBI:60530"/>
        <dbReference type="ChEBI" id="CHEBI:61715"/>
        <dbReference type="EC" id="1.17.99.9"/>
    </reaction>
    <physiologicalReaction direction="left-to-right" evidence="1">
        <dbReference type="Rhea" id="RHEA:63389"/>
    </physiologicalReaction>
</comment>
<comment type="cofactor">
    <cofactor evidence="1">
        <name>heme b</name>
        <dbReference type="ChEBI" id="CHEBI:60344"/>
    </cofactor>
</comment>
<comment type="pathway">
    <text evidence="1">Porphyrin-containing compound metabolism; heme A biosynthesis; heme A from heme O: step 1/1.</text>
</comment>
<comment type="subunit">
    <text evidence="1">Interacts with CtaB.</text>
</comment>
<comment type="subcellular location">
    <subcellularLocation>
        <location evidence="1">Cell membrane</location>
        <topology evidence="1">Multi-pass membrane protein</topology>
    </subcellularLocation>
</comment>
<comment type="domain">
    <text evidence="1">The N-half (TM1-TM4) and C-half (TM5-TM8) domains are connected by an intracellular loop. Each domain is formed from four-helix bundles and they align in a pseudo twofold symmetry manner. The N-half domain is the substrate-heme O binding domain and the C-half domain is the cofactor heme B binding domain.</text>
</comment>
<comment type="domain">
    <text evidence="1">The cysteines of disulfide bond Cys-35 and Cys-42 may be involved in transfer of reducing equivalents from quinol in the membrane to the active site of the enzyme.</text>
</comment>
<comment type="similarity">
    <text evidence="1">Belongs to the COX15/CtaA family. Type 1 subfamily.</text>
</comment>
<organism>
    <name type="scientific">Listeria innocua serovar 6a (strain ATCC BAA-680 / CLIP 11262)</name>
    <dbReference type="NCBI Taxonomy" id="272626"/>
    <lineage>
        <taxon>Bacteria</taxon>
        <taxon>Bacillati</taxon>
        <taxon>Bacillota</taxon>
        <taxon>Bacilli</taxon>
        <taxon>Bacillales</taxon>
        <taxon>Listeriaceae</taxon>
        <taxon>Listeria</taxon>
    </lineage>
</organism>
<gene>
    <name evidence="1" type="primary">ctaA</name>
    <name type="ordered locus">lin2164</name>
</gene>
<sequence length="305" mass="34567">MKKFLKVWSVLTIICMTVVVFGGALVTKTGSADGCGNSWPLCNGQLVRLTDVTPEKLIEFMHRMTTGISSIFVIVLAICAWIYMKNRRETKPLAIIAVLFLIIQALMGMAAVVWGQNPYIMALHFGISIICYASIVLLALMIFEVDRKFDARNLVMGTKLRINIYALTIYTYLAVYTGALVRHEKASMAVPVWPFENGHFIMPTSVQDYVQYFHRLAAFILIVWLLYVTWLVFRDYRRYRVLTFSMVLSLVFIALQAVTGALSVYTGVNLYIALAHSLIITMLFALLCYLCLLASRSKSNRLRIK</sequence>